<sequence length="719" mass="75828">MQEPAITPDLIASHGLSPDEYDRILNIVGRTPTFTELGIFSAMWNEHCSYKSSKKWLRTLPTTGPQVICGPGENAGVVDIGDGQAVVFKMESHNHPSYIEPYQGAATGVGGILRDVFTMGARPIAAMNSLSFGEISHPKTRQLVNGVVAGVGGYGNCFGVPTVGGEVRFDPAYNGNCLVNAFAAGLADADKIFYSAASGVGMPVVYLGAKTGRDGVGGATMASAEFDDTIEEKRPTVQVGDPFTEKRLMEATLELMQTGAVISIQDMGAAGLTCSAVEMGDKGNLGVRLDLEKVPVREEAMTAYEMMLSESQERMLMVLRPELEQEAKAVFDKWDLDFAIVGETIAEDRFLIVHNGEVKADLPLKTLAGTAPEYDRPWVATPAADPLGDVPDVDPIDGLRALISSPNYASKDWVFTQYDTMVMADTVRIPGIGAGIVRVHGTDKALAFTSDVTPRYVQANPVEGGKQAVAEAYRNLSAVGATPLATTDNMNFGNPEKPEIMGQFVGAIKGISAAVAALDMPIVSGNVSLYNETDGTAILPTPTIGAVGLIAHLDDVIGCDVRDGHVALVLGETHGHLGQSAILSEVYNRAEGDAPPVDLDQEKAHGDFIRANRAYIKACTDLSDGGLALAAFEMAENAGVGVCLDASDTATLFGEDQGRYLIACNFDQAEALMIAASQAGLTLTSVGKFTGQAVRFGASSAPLAELSDVYRQSFGAALA</sequence>
<proteinExistence type="inferred from homology"/>
<protein>
    <recommendedName>
        <fullName evidence="1">Phosphoribosylformylglycinamidine synthase subunit PurL</fullName>
        <shortName evidence="1">FGAM synthase</shortName>
        <ecNumber evidence="1">6.3.5.3</ecNumber>
    </recommendedName>
    <alternativeName>
        <fullName evidence="1">Formylglycinamide ribonucleotide amidotransferase subunit II</fullName>
        <shortName evidence="1">FGAR amidotransferase II</shortName>
        <shortName evidence="1">FGAR-AT II</shortName>
    </alternativeName>
    <alternativeName>
        <fullName evidence="1">Glutamine amidotransferase PurL</fullName>
    </alternativeName>
    <alternativeName>
        <fullName evidence="1">Phosphoribosylformylglycinamidine synthase subunit II</fullName>
    </alternativeName>
</protein>
<name>PURL_ROSDO</name>
<feature type="chain" id="PRO_1000050347" description="Phosphoribosylformylglycinamidine synthase subunit PurL">
    <location>
        <begin position="1"/>
        <end position="719"/>
    </location>
</feature>
<feature type="active site" evidence="1">
    <location>
        <position position="47"/>
    </location>
</feature>
<feature type="active site" description="Proton acceptor" evidence="1">
    <location>
        <position position="93"/>
    </location>
</feature>
<feature type="binding site" evidence="1">
    <location>
        <position position="50"/>
    </location>
    <ligand>
        <name>ATP</name>
        <dbReference type="ChEBI" id="CHEBI:30616"/>
    </ligand>
</feature>
<feature type="binding site" evidence="1">
    <location>
        <position position="89"/>
    </location>
    <ligand>
        <name>ATP</name>
        <dbReference type="ChEBI" id="CHEBI:30616"/>
    </ligand>
</feature>
<feature type="binding site" evidence="1">
    <location>
        <position position="91"/>
    </location>
    <ligand>
        <name>Mg(2+)</name>
        <dbReference type="ChEBI" id="CHEBI:18420"/>
        <label>1</label>
    </ligand>
</feature>
<feature type="binding site" evidence="1">
    <location>
        <begin position="92"/>
        <end position="95"/>
    </location>
    <ligand>
        <name>substrate</name>
    </ligand>
</feature>
<feature type="binding site" evidence="1">
    <location>
        <position position="114"/>
    </location>
    <ligand>
        <name>substrate</name>
    </ligand>
</feature>
<feature type="binding site" evidence="1">
    <location>
        <position position="115"/>
    </location>
    <ligand>
        <name>Mg(2+)</name>
        <dbReference type="ChEBI" id="CHEBI:18420"/>
        <label>2</label>
    </ligand>
</feature>
<feature type="binding site" evidence="1">
    <location>
        <position position="238"/>
    </location>
    <ligand>
        <name>substrate</name>
    </ligand>
</feature>
<feature type="binding site" evidence="1">
    <location>
        <position position="266"/>
    </location>
    <ligand>
        <name>Mg(2+)</name>
        <dbReference type="ChEBI" id="CHEBI:18420"/>
        <label>2</label>
    </ligand>
</feature>
<feature type="binding site" evidence="1">
    <location>
        <begin position="310"/>
        <end position="312"/>
    </location>
    <ligand>
        <name>substrate</name>
    </ligand>
</feature>
<feature type="binding site" evidence="1">
    <location>
        <position position="488"/>
    </location>
    <ligand>
        <name>ATP</name>
        <dbReference type="ChEBI" id="CHEBI:30616"/>
    </ligand>
</feature>
<feature type="binding site" evidence="1">
    <location>
        <position position="525"/>
    </location>
    <ligand>
        <name>ATP</name>
        <dbReference type="ChEBI" id="CHEBI:30616"/>
    </ligand>
</feature>
<feature type="binding site" evidence="1">
    <location>
        <position position="526"/>
    </location>
    <ligand>
        <name>Mg(2+)</name>
        <dbReference type="ChEBI" id="CHEBI:18420"/>
        <label>1</label>
    </ligand>
</feature>
<feature type="binding site" evidence="1">
    <location>
        <position position="528"/>
    </location>
    <ligand>
        <name>substrate</name>
    </ligand>
</feature>
<gene>
    <name evidence="1" type="primary">purL</name>
    <name type="ordered locus">RD1_3232</name>
</gene>
<comment type="function">
    <text evidence="1">Part of the phosphoribosylformylglycinamidine synthase complex involved in the purines biosynthetic pathway. Catalyzes the ATP-dependent conversion of formylglycinamide ribonucleotide (FGAR) and glutamine to yield formylglycinamidine ribonucleotide (FGAM) and glutamate. The FGAM synthase complex is composed of three subunits. PurQ produces an ammonia molecule by converting glutamine to glutamate. PurL transfers the ammonia molecule to FGAR to form FGAM in an ATP-dependent manner. PurS interacts with PurQ and PurL and is thought to assist in the transfer of the ammonia molecule from PurQ to PurL.</text>
</comment>
<comment type="catalytic activity">
    <reaction evidence="1">
        <text>N(2)-formyl-N(1)-(5-phospho-beta-D-ribosyl)glycinamide + L-glutamine + ATP + H2O = 2-formamido-N(1)-(5-O-phospho-beta-D-ribosyl)acetamidine + L-glutamate + ADP + phosphate + H(+)</text>
        <dbReference type="Rhea" id="RHEA:17129"/>
        <dbReference type="ChEBI" id="CHEBI:15377"/>
        <dbReference type="ChEBI" id="CHEBI:15378"/>
        <dbReference type="ChEBI" id="CHEBI:29985"/>
        <dbReference type="ChEBI" id="CHEBI:30616"/>
        <dbReference type="ChEBI" id="CHEBI:43474"/>
        <dbReference type="ChEBI" id="CHEBI:58359"/>
        <dbReference type="ChEBI" id="CHEBI:147286"/>
        <dbReference type="ChEBI" id="CHEBI:147287"/>
        <dbReference type="ChEBI" id="CHEBI:456216"/>
        <dbReference type="EC" id="6.3.5.3"/>
    </reaction>
</comment>
<comment type="pathway">
    <text evidence="1">Purine metabolism; IMP biosynthesis via de novo pathway; 5-amino-1-(5-phospho-D-ribosyl)imidazole from N(2)-formyl-N(1)-(5-phospho-D-ribosyl)glycinamide: step 1/2.</text>
</comment>
<comment type="subunit">
    <text evidence="1">Monomer. Part of the FGAM synthase complex composed of 1 PurL, 1 PurQ and 2 PurS subunits.</text>
</comment>
<comment type="subcellular location">
    <subcellularLocation>
        <location evidence="1">Cytoplasm</location>
    </subcellularLocation>
</comment>
<comment type="similarity">
    <text evidence="1">Belongs to the FGAMS family.</text>
</comment>
<reference key="1">
    <citation type="journal article" date="2007" name="J. Bacteriol.">
        <title>The complete genome sequence of Roseobacter denitrificans reveals a mixotrophic rather than photosynthetic metabolism.</title>
        <authorList>
            <person name="Swingley W.D."/>
            <person name="Sadekar S."/>
            <person name="Mastrian S.D."/>
            <person name="Matthies H.J."/>
            <person name="Hao J."/>
            <person name="Ramos H."/>
            <person name="Acharya C.R."/>
            <person name="Conrad A.L."/>
            <person name="Taylor H.L."/>
            <person name="Dejesa L.C."/>
            <person name="Shah M.K."/>
            <person name="O'Huallachain M.E."/>
            <person name="Lince M.T."/>
            <person name="Blankenship R.E."/>
            <person name="Beatty J.T."/>
            <person name="Touchman J.W."/>
        </authorList>
    </citation>
    <scope>NUCLEOTIDE SEQUENCE [LARGE SCALE GENOMIC DNA]</scope>
    <source>
        <strain>ATCC 33942 / OCh 114</strain>
    </source>
</reference>
<accession>Q163V9</accession>
<organism>
    <name type="scientific">Roseobacter denitrificans (strain ATCC 33942 / OCh 114)</name>
    <name type="common">Erythrobacter sp. (strain OCh 114)</name>
    <name type="synonym">Roseobacter denitrificans</name>
    <dbReference type="NCBI Taxonomy" id="375451"/>
    <lineage>
        <taxon>Bacteria</taxon>
        <taxon>Pseudomonadati</taxon>
        <taxon>Pseudomonadota</taxon>
        <taxon>Alphaproteobacteria</taxon>
        <taxon>Rhodobacterales</taxon>
        <taxon>Roseobacteraceae</taxon>
        <taxon>Roseobacter</taxon>
    </lineage>
</organism>
<keyword id="KW-0067">ATP-binding</keyword>
<keyword id="KW-0963">Cytoplasm</keyword>
<keyword id="KW-0436">Ligase</keyword>
<keyword id="KW-0460">Magnesium</keyword>
<keyword id="KW-0479">Metal-binding</keyword>
<keyword id="KW-0547">Nucleotide-binding</keyword>
<keyword id="KW-0658">Purine biosynthesis</keyword>
<keyword id="KW-1185">Reference proteome</keyword>
<dbReference type="EC" id="6.3.5.3" evidence="1"/>
<dbReference type="EMBL" id="CP000362">
    <property type="protein sequence ID" value="ABG32734.1"/>
    <property type="molecule type" value="Genomic_DNA"/>
</dbReference>
<dbReference type="RefSeq" id="WP_011569350.1">
    <property type="nucleotide sequence ID" value="NC_008209.1"/>
</dbReference>
<dbReference type="SMR" id="Q163V9"/>
<dbReference type="STRING" id="375451.RD1_3232"/>
<dbReference type="KEGG" id="rde:RD1_3232"/>
<dbReference type="eggNOG" id="COG0046">
    <property type="taxonomic scope" value="Bacteria"/>
</dbReference>
<dbReference type="HOGENOM" id="CLU_003100_0_1_5"/>
<dbReference type="OrthoDB" id="9804441at2"/>
<dbReference type="UniPathway" id="UPA00074">
    <property type="reaction ID" value="UER00128"/>
</dbReference>
<dbReference type="Proteomes" id="UP000007029">
    <property type="component" value="Chromosome"/>
</dbReference>
<dbReference type="GO" id="GO:0005737">
    <property type="term" value="C:cytoplasm"/>
    <property type="evidence" value="ECO:0007669"/>
    <property type="project" value="UniProtKB-SubCell"/>
</dbReference>
<dbReference type="GO" id="GO:0005524">
    <property type="term" value="F:ATP binding"/>
    <property type="evidence" value="ECO:0007669"/>
    <property type="project" value="UniProtKB-UniRule"/>
</dbReference>
<dbReference type="GO" id="GO:0000287">
    <property type="term" value="F:magnesium ion binding"/>
    <property type="evidence" value="ECO:0007669"/>
    <property type="project" value="UniProtKB-UniRule"/>
</dbReference>
<dbReference type="GO" id="GO:0004642">
    <property type="term" value="F:phosphoribosylformylglycinamidine synthase activity"/>
    <property type="evidence" value="ECO:0007669"/>
    <property type="project" value="UniProtKB-UniRule"/>
</dbReference>
<dbReference type="GO" id="GO:0006189">
    <property type="term" value="P:'de novo' IMP biosynthetic process"/>
    <property type="evidence" value="ECO:0007669"/>
    <property type="project" value="UniProtKB-UniRule"/>
</dbReference>
<dbReference type="CDD" id="cd02203">
    <property type="entry name" value="PurL_repeat1"/>
    <property type="match status" value="1"/>
</dbReference>
<dbReference type="CDD" id="cd02204">
    <property type="entry name" value="PurL_repeat2"/>
    <property type="match status" value="1"/>
</dbReference>
<dbReference type="FunFam" id="3.30.1330.10:FF:000004">
    <property type="entry name" value="Phosphoribosylformylglycinamidine synthase subunit PurL"/>
    <property type="match status" value="1"/>
</dbReference>
<dbReference type="Gene3D" id="3.90.650.10">
    <property type="entry name" value="PurM-like C-terminal domain"/>
    <property type="match status" value="2"/>
</dbReference>
<dbReference type="Gene3D" id="3.30.1330.10">
    <property type="entry name" value="PurM-like, N-terminal domain"/>
    <property type="match status" value="2"/>
</dbReference>
<dbReference type="HAMAP" id="MF_00420">
    <property type="entry name" value="PurL_2"/>
    <property type="match status" value="1"/>
</dbReference>
<dbReference type="InterPro" id="IPR010074">
    <property type="entry name" value="PRibForGlyAmidine_synth_PurL"/>
</dbReference>
<dbReference type="InterPro" id="IPR041609">
    <property type="entry name" value="PurL_linker"/>
</dbReference>
<dbReference type="InterPro" id="IPR010918">
    <property type="entry name" value="PurM-like_C_dom"/>
</dbReference>
<dbReference type="InterPro" id="IPR036676">
    <property type="entry name" value="PurM-like_C_sf"/>
</dbReference>
<dbReference type="InterPro" id="IPR016188">
    <property type="entry name" value="PurM-like_N"/>
</dbReference>
<dbReference type="InterPro" id="IPR036921">
    <property type="entry name" value="PurM-like_N_sf"/>
</dbReference>
<dbReference type="NCBIfam" id="TIGR01736">
    <property type="entry name" value="FGAM_synth_II"/>
    <property type="match status" value="1"/>
</dbReference>
<dbReference type="NCBIfam" id="NF002290">
    <property type="entry name" value="PRK01213.1"/>
    <property type="match status" value="1"/>
</dbReference>
<dbReference type="PANTHER" id="PTHR43555">
    <property type="entry name" value="PHOSPHORIBOSYLFORMYLGLYCINAMIDINE SYNTHASE SUBUNIT PURL"/>
    <property type="match status" value="1"/>
</dbReference>
<dbReference type="PANTHER" id="PTHR43555:SF1">
    <property type="entry name" value="PHOSPHORIBOSYLFORMYLGLYCINAMIDINE SYNTHASE SUBUNIT PURL"/>
    <property type="match status" value="1"/>
</dbReference>
<dbReference type="Pfam" id="PF00586">
    <property type="entry name" value="AIRS"/>
    <property type="match status" value="2"/>
</dbReference>
<dbReference type="Pfam" id="PF02769">
    <property type="entry name" value="AIRS_C"/>
    <property type="match status" value="2"/>
</dbReference>
<dbReference type="Pfam" id="PF18072">
    <property type="entry name" value="FGAR-AT_linker"/>
    <property type="match status" value="1"/>
</dbReference>
<dbReference type="PIRSF" id="PIRSF001587">
    <property type="entry name" value="FGAM_synthase_II"/>
    <property type="match status" value="1"/>
</dbReference>
<dbReference type="SUPFAM" id="SSF56042">
    <property type="entry name" value="PurM C-terminal domain-like"/>
    <property type="match status" value="2"/>
</dbReference>
<dbReference type="SUPFAM" id="SSF55326">
    <property type="entry name" value="PurM N-terminal domain-like"/>
    <property type="match status" value="2"/>
</dbReference>
<evidence type="ECO:0000255" key="1">
    <source>
        <dbReference type="HAMAP-Rule" id="MF_00420"/>
    </source>
</evidence>